<gene>
    <name type="ordered locus">PXO_02000</name>
</gene>
<feature type="chain" id="PRO_1000198307" description="UPF0301 protein PXO_02000">
    <location>
        <begin position="1"/>
        <end position="188"/>
    </location>
</feature>
<proteinExistence type="inferred from homology"/>
<organism>
    <name type="scientific">Xanthomonas oryzae pv. oryzae (strain PXO99A)</name>
    <dbReference type="NCBI Taxonomy" id="360094"/>
    <lineage>
        <taxon>Bacteria</taxon>
        <taxon>Pseudomonadati</taxon>
        <taxon>Pseudomonadota</taxon>
        <taxon>Gammaproteobacteria</taxon>
        <taxon>Lysobacterales</taxon>
        <taxon>Lysobacteraceae</taxon>
        <taxon>Xanthomonas</taxon>
    </lineage>
</organism>
<comment type="similarity">
    <text evidence="1">Belongs to the UPF0301 (AlgH) family.</text>
</comment>
<dbReference type="EMBL" id="CP000967">
    <property type="protein sequence ID" value="ACD60372.1"/>
    <property type="molecule type" value="Genomic_DNA"/>
</dbReference>
<dbReference type="RefSeq" id="WP_011258225.1">
    <property type="nucleotide sequence ID" value="NC_010717.2"/>
</dbReference>
<dbReference type="SMR" id="B2SIZ5"/>
<dbReference type="KEGG" id="xop:PXO_02000"/>
<dbReference type="eggNOG" id="COG1678">
    <property type="taxonomic scope" value="Bacteria"/>
</dbReference>
<dbReference type="HOGENOM" id="CLU_057596_1_0_6"/>
<dbReference type="Proteomes" id="UP000001740">
    <property type="component" value="Chromosome"/>
</dbReference>
<dbReference type="GO" id="GO:0005829">
    <property type="term" value="C:cytosol"/>
    <property type="evidence" value="ECO:0007669"/>
    <property type="project" value="TreeGrafter"/>
</dbReference>
<dbReference type="Gene3D" id="3.40.1740.10">
    <property type="entry name" value="VC0467-like"/>
    <property type="match status" value="1"/>
</dbReference>
<dbReference type="HAMAP" id="MF_00758">
    <property type="entry name" value="UPF0301"/>
    <property type="match status" value="1"/>
</dbReference>
<dbReference type="InterPro" id="IPR003774">
    <property type="entry name" value="AlgH-like"/>
</dbReference>
<dbReference type="NCBIfam" id="NF001266">
    <property type="entry name" value="PRK00228.1-1"/>
    <property type="match status" value="1"/>
</dbReference>
<dbReference type="PANTHER" id="PTHR30327">
    <property type="entry name" value="UNCHARACTERIZED PROTEIN YQGE"/>
    <property type="match status" value="1"/>
</dbReference>
<dbReference type="PANTHER" id="PTHR30327:SF1">
    <property type="entry name" value="UPF0301 PROTEIN YQGE"/>
    <property type="match status" value="1"/>
</dbReference>
<dbReference type="Pfam" id="PF02622">
    <property type="entry name" value="DUF179"/>
    <property type="match status" value="1"/>
</dbReference>
<dbReference type="SUPFAM" id="SSF143456">
    <property type="entry name" value="VC0467-like"/>
    <property type="match status" value="1"/>
</dbReference>
<sequence>MSVLPTPLANQLLIALPALSDPTFSRSVALICQHDENGAMGVLVNRPSEYTLGEVLSQMGIDTDDEPLREQIVLSGGPVHPERGFVIHDDAREWDSSLEVGQGVFLTTSRDILEAMAAGNGPRNVLVALGCAGWGAGQLEFELGENSWLTAPSDANVLFATALEDRWQTAAGRIGVDLFRLTDYSGHA</sequence>
<evidence type="ECO:0000255" key="1">
    <source>
        <dbReference type="HAMAP-Rule" id="MF_00758"/>
    </source>
</evidence>
<reference key="1">
    <citation type="journal article" date="2008" name="BMC Genomics">
        <title>Genome sequence and rapid evolution of the rice pathogen Xanthomonas oryzae pv. oryzae PXO99A.</title>
        <authorList>
            <person name="Salzberg S.L."/>
            <person name="Sommer D.D."/>
            <person name="Schatz M.C."/>
            <person name="Phillippy A.M."/>
            <person name="Rabinowicz P.D."/>
            <person name="Tsuge S."/>
            <person name="Furutani A."/>
            <person name="Ochiai H."/>
            <person name="Delcher A.L."/>
            <person name="Kelley D."/>
            <person name="Madupu R."/>
            <person name="Puiu D."/>
            <person name="Radune D."/>
            <person name="Shumway M."/>
            <person name="Trapnell C."/>
            <person name="Aparna G."/>
            <person name="Jha G."/>
            <person name="Pandey A."/>
            <person name="Patil P.B."/>
            <person name="Ishihara H."/>
            <person name="Meyer D.F."/>
            <person name="Szurek B."/>
            <person name="Verdier V."/>
            <person name="Koebnik R."/>
            <person name="Dow J.M."/>
            <person name="Ryan R.P."/>
            <person name="Hirata H."/>
            <person name="Tsuyumu S."/>
            <person name="Won Lee S."/>
            <person name="Seo Y.-S."/>
            <person name="Sriariyanum M."/>
            <person name="Ronald P.C."/>
            <person name="Sonti R.V."/>
            <person name="Van Sluys M.-A."/>
            <person name="Leach J.E."/>
            <person name="White F.F."/>
            <person name="Bogdanove A.J."/>
        </authorList>
    </citation>
    <scope>NUCLEOTIDE SEQUENCE [LARGE SCALE GENOMIC DNA]</scope>
    <source>
        <strain>PXO99A</strain>
    </source>
</reference>
<name>Y2000_XANOP</name>
<protein>
    <recommendedName>
        <fullName evidence="1">UPF0301 protein PXO_02000</fullName>
    </recommendedName>
</protein>
<accession>B2SIZ5</accession>